<keyword id="KW-0012">Acyltransferase</keyword>
<keyword id="KW-0997">Cell inner membrane</keyword>
<keyword id="KW-1003">Cell membrane</keyword>
<keyword id="KW-0444">Lipid biosynthesis</keyword>
<keyword id="KW-0443">Lipid metabolism</keyword>
<keyword id="KW-0472">Membrane</keyword>
<keyword id="KW-0594">Phospholipid biosynthesis</keyword>
<keyword id="KW-1208">Phospholipid metabolism</keyword>
<keyword id="KW-1185">Reference proteome</keyword>
<keyword id="KW-0808">Transferase</keyword>
<gene>
    <name evidence="1" type="primary">plsB</name>
    <name type="ordered locus">PP_1520</name>
</gene>
<name>PLSB_PSEPK</name>
<comment type="catalytic activity">
    <reaction evidence="1">
        <text>sn-glycerol 3-phosphate + an acyl-CoA = a 1-acyl-sn-glycero-3-phosphate + CoA</text>
        <dbReference type="Rhea" id="RHEA:15325"/>
        <dbReference type="ChEBI" id="CHEBI:57287"/>
        <dbReference type="ChEBI" id="CHEBI:57597"/>
        <dbReference type="ChEBI" id="CHEBI:57970"/>
        <dbReference type="ChEBI" id="CHEBI:58342"/>
        <dbReference type="EC" id="2.3.1.15"/>
    </reaction>
</comment>
<comment type="pathway">
    <text evidence="1">Phospholipid metabolism; CDP-diacylglycerol biosynthesis; CDP-diacylglycerol from sn-glycerol 3-phosphate: step 1/3.</text>
</comment>
<comment type="subcellular location">
    <subcellularLocation>
        <location evidence="1">Cell inner membrane</location>
        <topology evidence="1">Peripheral membrane protein</topology>
        <orientation evidence="1">Cytoplasmic side</orientation>
    </subcellularLocation>
</comment>
<comment type="domain">
    <text evidence="1">The HXXXXD motif is essential for acyltransferase activity and may constitute the binding site for the phosphate moiety of the glycerol-3-phosphate.</text>
</comment>
<comment type="similarity">
    <text evidence="1">Belongs to the GPAT/DAPAT family.</text>
</comment>
<feature type="chain" id="PRO_0000195229" description="Glycerol-3-phosphate acyltransferase">
    <location>
        <begin position="1"/>
        <end position="828"/>
    </location>
</feature>
<feature type="short sequence motif" description="HXXXXD motif">
    <location>
        <begin position="310"/>
        <end position="315"/>
    </location>
</feature>
<reference key="1">
    <citation type="journal article" date="2002" name="Environ. Microbiol.">
        <title>Complete genome sequence and comparative analysis of the metabolically versatile Pseudomonas putida KT2440.</title>
        <authorList>
            <person name="Nelson K.E."/>
            <person name="Weinel C."/>
            <person name="Paulsen I.T."/>
            <person name="Dodson R.J."/>
            <person name="Hilbert H."/>
            <person name="Martins dos Santos V.A.P."/>
            <person name="Fouts D.E."/>
            <person name="Gill S.R."/>
            <person name="Pop M."/>
            <person name="Holmes M."/>
            <person name="Brinkac L.M."/>
            <person name="Beanan M.J."/>
            <person name="DeBoy R.T."/>
            <person name="Daugherty S.C."/>
            <person name="Kolonay J.F."/>
            <person name="Madupu R."/>
            <person name="Nelson W.C."/>
            <person name="White O."/>
            <person name="Peterson J.D."/>
            <person name="Khouri H.M."/>
            <person name="Hance I."/>
            <person name="Chris Lee P."/>
            <person name="Holtzapple E.K."/>
            <person name="Scanlan D."/>
            <person name="Tran K."/>
            <person name="Moazzez A."/>
            <person name="Utterback T.R."/>
            <person name="Rizzo M."/>
            <person name="Lee K."/>
            <person name="Kosack D."/>
            <person name="Moestl D."/>
            <person name="Wedler H."/>
            <person name="Lauber J."/>
            <person name="Stjepandic D."/>
            <person name="Hoheisel J."/>
            <person name="Straetz M."/>
            <person name="Heim S."/>
            <person name="Kiewitz C."/>
            <person name="Eisen J.A."/>
            <person name="Timmis K.N."/>
            <person name="Duesterhoeft A."/>
            <person name="Tuemmler B."/>
            <person name="Fraser C.M."/>
        </authorList>
    </citation>
    <scope>NUCLEOTIDE SEQUENCE [LARGE SCALE GENOMIC DNA]</scope>
    <source>
        <strain>ATCC 47054 / DSM 6125 / CFBP 8728 / NCIMB 11950 / KT2440</strain>
    </source>
</reference>
<protein>
    <recommendedName>
        <fullName evidence="1">Glycerol-3-phosphate acyltransferase</fullName>
        <shortName evidence="1">GPAT</shortName>
        <ecNumber evidence="1">2.3.1.15</ecNumber>
    </recommendedName>
</protein>
<dbReference type="EC" id="2.3.1.15" evidence="1"/>
<dbReference type="EMBL" id="AE015451">
    <property type="protein sequence ID" value="AAN67141.1"/>
    <property type="molecule type" value="Genomic_DNA"/>
</dbReference>
<dbReference type="RefSeq" id="NP_743677.1">
    <property type="nucleotide sequence ID" value="NC_002947.4"/>
</dbReference>
<dbReference type="RefSeq" id="WP_010952610.1">
    <property type="nucleotide sequence ID" value="NZ_CP169744.1"/>
</dbReference>
<dbReference type="SMR" id="Q88MQ0"/>
<dbReference type="STRING" id="160488.PP_1520"/>
<dbReference type="PaxDb" id="160488-PP_1520"/>
<dbReference type="KEGG" id="ppu:PP_1520"/>
<dbReference type="PATRIC" id="fig|160488.4.peg.1610"/>
<dbReference type="eggNOG" id="COG2937">
    <property type="taxonomic scope" value="Bacteria"/>
</dbReference>
<dbReference type="HOGENOM" id="CLU_015407_0_0_6"/>
<dbReference type="OrthoDB" id="335193at2"/>
<dbReference type="PhylomeDB" id="Q88MQ0"/>
<dbReference type="BioCyc" id="PPUT160488:G1G01-1611-MONOMER"/>
<dbReference type="UniPathway" id="UPA00557">
    <property type="reaction ID" value="UER00612"/>
</dbReference>
<dbReference type="Proteomes" id="UP000000556">
    <property type="component" value="Chromosome"/>
</dbReference>
<dbReference type="GO" id="GO:0005886">
    <property type="term" value="C:plasma membrane"/>
    <property type="evidence" value="ECO:0007669"/>
    <property type="project" value="UniProtKB-SubCell"/>
</dbReference>
<dbReference type="GO" id="GO:0004366">
    <property type="term" value="F:glycerol-3-phosphate O-acyltransferase activity"/>
    <property type="evidence" value="ECO:0007669"/>
    <property type="project" value="UniProtKB-UniRule"/>
</dbReference>
<dbReference type="GO" id="GO:0016024">
    <property type="term" value="P:CDP-diacylglycerol biosynthetic process"/>
    <property type="evidence" value="ECO:0007669"/>
    <property type="project" value="UniProtKB-UniRule"/>
</dbReference>
<dbReference type="GO" id="GO:0006631">
    <property type="term" value="P:fatty acid metabolic process"/>
    <property type="evidence" value="ECO:0007669"/>
    <property type="project" value="TreeGrafter"/>
</dbReference>
<dbReference type="CDD" id="cd07993">
    <property type="entry name" value="LPLAT_DHAPAT-like"/>
    <property type="match status" value="1"/>
</dbReference>
<dbReference type="HAMAP" id="MF_00393">
    <property type="entry name" value="Glyc3P_acyltrans"/>
    <property type="match status" value="1"/>
</dbReference>
<dbReference type="InterPro" id="IPR022284">
    <property type="entry name" value="GPAT/DHAPAT"/>
</dbReference>
<dbReference type="InterPro" id="IPR045520">
    <property type="entry name" value="GPAT/DHAPAT_C"/>
</dbReference>
<dbReference type="InterPro" id="IPR041728">
    <property type="entry name" value="GPAT/DHAPAT_LPLAT"/>
</dbReference>
<dbReference type="InterPro" id="IPR028354">
    <property type="entry name" value="GPAT_PlsB"/>
</dbReference>
<dbReference type="InterPro" id="IPR002123">
    <property type="entry name" value="Plipid/glycerol_acylTrfase"/>
</dbReference>
<dbReference type="NCBIfam" id="TIGR03703">
    <property type="entry name" value="plsB"/>
    <property type="match status" value="1"/>
</dbReference>
<dbReference type="NCBIfam" id="NF003441">
    <property type="entry name" value="PRK04974.1"/>
    <property type="match status" value="1"/>
</dbReference>
<dbReference type="PANTHER" id="PTHR12563:SF17">
    <property type="entry name" value="DIHYDROXYACETONE PHOSPHATE ACYLTRANSFERASE"/>
    <property type="match status" value="1"/>
</dbReference>
<dbReference type="PANTHER" id="PTHR12563">
    <property type="entry name" value="GLYCEROL-3-PHOSPHATE ACYLTRANSFERASE"/>
    <property type="match status" value="1"/>
</dbReference>
<dbReference type="Pfam" id="PF01553">
    <property type="entry name" value="Acyltransferase"/>
    <property type="match status" value="1"/>
</dbReference>
<dbReference type="Pfam" id="PF19277">
    <property type="entry name" value="GPAT_C"/>
    <property type="match status" value="1"/>
</dbReference>
<dbReference type="PIRSF" id="PIRSF500064">
    <property type="entry name" value="GPAT"/>
    <property type="match status" value="1"/>
</dbReference>
<dbReference type="PIRSF" id="PIRSF000437">
    <property type="entry name" value="GPAT_DHAPAT"/>
    <property type="match status" value="1"/>
</dbReference>
<dbReference type="SMART" id="SM00563">
    <property type="entry name" value="PlsC"/>
    <property type="match status" value="1"/>
</dbReference>
<dbReference type="SUPFAM" id="SSF69593">
    <property type="entry name" value="Glycerol-3-phosphate (1)-acyltransferase"/>
    <property type="match status" value="1"/>
</dbReference>
<proteinExistence type="inferred from homology"/>
<evidence type="ECO:0000255" key="1">
    <source>
        <dbReference type="HAMAP-Rule" id="MF_00393"/>
    </source>
</evidence>
<accession>Q88MQ0</accession>
<sequence length="828" mass="93693">MTRSPLHRLIFGGLRRLLYLWVRSETINQSSMTLNLDRSRPVFYALPSPALTDLAVLDHECTKAGLPRPVLPVAVGPLQEPAAFFYLTPDPDWLGRQDKSGAPPTLERLVAAVSQHAEEDAQIIPVSVFWGQTPASESSPWKLLFADSWAVTGRLRRLLTVLILGRKTRVQFSAPIHLRELVQHNKGHERTVRMAQRLMRVHFRNLKTAVIGPDISHRRTLVKGLVHAPQVRQAIADEAQRENLPLAKAEAQALRYGNEIASDYTYTAIRFLEVVLSWFWNKIYDGIKVNHIEQVQGIAPGHEVIYVPCHRSHIDYLLLSYLLFRNGLTPPHVAAGINLNMPVVGNLLRRGGAFFMRRTFKGNPLYTAVFNEYLHTLYTKGFPVEYFVEGGRSRTGRMLQPRTGMLAITLRSFLRSSRTPIVFVPVYIGYERVLEGRTYLGELRGASKKKESVLDIFKVFGALKQRFGQVYVNFGEPIRLAGFLDQQQPGWREQDHGPQYRPEWLNATTARLGETVARHLNEAAAINPVNLVALALLSTSRLALDERALTRVLDLYLALLRQVPYSPHTTLPEGDGQALIEHVRSMNLVAEQKDALGRILYLDEGNAVLMTYYRNNVLHIFALPALLASFFLSSSRMSRQLLGQYVHALYPYLQAELFLRWTPEQLDEVIDQWLVALVEQGLLRQDNDLYVRPAPSSRQFVLLTLLARTITQTLQRFYMATSLLINSGQNSLSAEALEDLCVMMAQRLSILHGLNAPEFFDKTLFRHFIQTLLQQGVLHADAQGKLSYHDKLGELAEGVAKRVLSAELRLSIRQVALHRDDGLETSTL</sequence>
<organism>
    <name type="scientific">Pseudomonas putida (strain ATCC 47054 / DSM 6125 / CFBP 8728 / NCIMB 11950 / KT2440)</name>
    <dbReference type="NCBI Taxonomy" id="160488"/>
    <lineage>
        <taxon>Bacteria</taxon>
        <taxon>Pseudomonadati</taxon>
        <taxon>Pseudomonadota</taxon>
        <taxon>Gammaproteobacteria</taxon>
        <taxon>Pseudomonadales</taxon>
        <taxon>Pseudomonadaceae</taxon>
        <taxon>Pseudomonas</taxon>
    </lineage>
</organism>